<sequence>MKLKKHVAVLLISFLCLIGLVTQHAWSSNGLPRIDNKTLAKLSLQHPVVVLFRHAERCDRSSNECLSDKTGITVKGANDARSLGKELTTDIKKYDLYASDTVRTIQSATWFATDKKVTVDKKFQQCGKAIYSAINDVQIRSPDKNIIIFTHNHCLSYIAKDKRDVKFSPDYLDGLVMHVENGKLFLDGEFVRY</sequence>
<accession>B7LM79</accession>
<reference key="1">
    <citation type="journal article" date="2009" name="PLoS Genet.">
        <title>Organised genome dynamics in the Escherichia coli species results in highly diverse adaptive paths.</title>
        <authorList>
            <person name="Touchon M."/>
            <person name="Hoede C."/>
            <person name="Tenaillon O."/>
            <person name="Barbe V."/>
            <person name="Baeriswyl S."/>
            <person name="Bidet P."/>
            <person name="Bingen E."/>
            <person name="Bonacorsi S."/>
            <person name="Bouchier C."/>
            <person name="Bouvet O."/>
            <person name="Calteau A."/>
            <person name="Chiapello H."/>
            <person name="Clermont O."/>
            <person name="Cruveiller S."/>
            <person name="Danchin A."/>
            <person name="Diard M."/>
            <person name="Dossat C."/>
            <person name="Karoui M.E."/>
            <person name="Frapy E."/>
            <person name="Garry L."/>
            <person name="Ghigo J.M."/>
            <person name="Gilles A.M."/>
            <person name="Johnson J."/>
            <person name="Le Bouguenec C."/>
            <person name="Lescat M."/>
            <person name="Mangenot S."/>
            <person name="Martinez-Jehanne V."/>
            <person name="Matic I."/>
            <person name="Nassif X."/>
            <person name="Oztas S."/>
            <person name="Petit M.A."/>
            <person name="Pichon C."/>
            <person name="Rouy Z."/>
            <person name="Ruf C.S."/>
            <person name="Schneider D."/>
            <person name="Tourret J."/>
            <person name="Vacherie B."/>
            <person name="Vallenet D."/>
            <person name="Medigue C."/>
            <person name="Rocha E.P.C."/>
            <person name="Denamur E."/>
        </authorList>
    </citation>
    <scope>NUCLEOTIDE SEQUENCE [LARGE SCALE GENOMIC DNA]</scope>
    <source>
        <strain>ATCC 35469 / DSM 13698 / BCRC 15582 / CCUG 18766 / IAM 14443 / JCM 21226 / LMG 7866 / NBRC 102419 / NCTC 12128 / CDC 0568-73</strain>
    </source>
</reference>
<dbReference type="EC" id="3.1.3.-" evidence="1"/>
<dbReference type="EMBL" id="CU928158">
    <property type="protein sequence ID" value="CAQ88452.1"/>
    <property type="molecule type" value="Genomic_DNA"/>
</dbReference>
<dbReference type="RefSeq" id="WP_000768442.1">
    <property type="nucleotide sequence ID" value="NC_011740.1"/>
</dbReference>
<dbReference type="SMR" id="B7LM79"/>
<dbReference type="KEGG" id="efe:EFER_0917"/>
<dbReference type="HOGENOM" id="CLU_106705_1_0_6"/>
<dbReference type="OrthoDB" id="6195868at2"/>
<dbReference type="UniPathway" id="UPA00451"/>
<dbReference type="Proteomes" id="UP000000745">
    <property type="component" value="Chromosome"/>
</dbReference>
<dbReference type="GO" id="GO:0042597">
    <property type="term" value="C:periplasmic space"/>
    <property type="evidence" value="ECO:0007669"/>
    <property type="project" value="UniProtKB-SubCell"/>
</dbReference>
<dbReference type="GO" id="GO:0016791">
    <property type="term" value="F:phosphatase activity"/>
    <property type="evidence" value="ECO:0007669"/>
    <property type="project" value="UniProtKB-UniRule"/>
</dbReference>
<dbReference type="GO" id="GO:0008653">
    <property type="term" value="P:lipopolysaccharide metabolic process"/>
    <property type="evidence" value="ECO:0007669"/>
    <property type="project" value="UniProtKB-UniRule"/>
</dbReference>
<dbReference type="CDD" id="cd07040">
    <property type="entry name" value="HP"/>
    <property type="match status" value="1"/>
</dbReference>
<dbReference type="Gene3D" id="3.40.50.1240">
    <property type="entry name" value="Phosphoglycerate mutase-like"/>
    <property type="match status" value="1"/>
</dbReference>
<dbReference type="HAMAP" id="MF_01868">
    <property type="entry name" value="Ais"/>
    <property type="match status" value="1"/>
</dbReference>
<dbReference type="InterPro" id="IPR029033">
    <property type="entry name" value="His_PPase_superfam"/>
</dbReference>
<dbReference type="InterPro" id="IPR011310">
    <property type="entry name" value="LipoPS_heptP_Pase"/>
</dbReference>
<dbReference type="NCBIfam" id="NF011945">
    <property type="entry name" value="PRK15416.1"/>
    <property type="match status" value="1"/>
</dbReference>
<dbReference type="SUPFAM" id="SSF53254">
    <property type="entry name" value="Phosphoglycerate mutase-like"/>
    <property type="match status" value="1"/>
</dbReference>
<proteinExistence type="inferred from homology"/>
<feature type="signal peptide" evidence="1">
    <location>
        <begin position="1"/>
        <end position="25"/>
    </location>
</feature>
<feature type="chain" id="PRO_0000380573" description="Lipopolysaccharide core heptose(II)-phosphate phosphatase">
    <location>
        <begin position="26"/>
        <end position="193"/>
    </location>
</feature>
<organism>
    <name type="scientific">Escherichia fergusonii (strain ATCC 35469 / DSM 13698 / CCUG 18766 / IAM 14443 / JCM 21226 / LMG 7866 / NBRC 102419 / NCTC 12128 / CDC 0568-73)</name>
    <dbReference type="NCBI Taxonomy" id="585054"/>
    <lineage>
        <taxon>Bacteria</taxon>
        <taxon>Pseudomonadati</taxon>
        <taxon>Pseudomonadota</taxon>
        <taxon>Gammaproteobacteria</taxon>
        <taxon>Enterobacterales</taxon>
        <taxon>Enterobacteriaceae</taxon>
        <taxon>Escherichia</taxon>
    </lineage>
</organism>
<gene>
    <name evidence="1" type="primary">ais</name>
    <name type="ordered locus">EFER_0917</name>
</gene>
<name>AIS_ESCF3</name>
<keyword id="KW-0378">Hydrolase</keyword>
<keyword id="KW-0574">Periplasm</keyword>
<keyword id="KW-0732">Signal</keyword>
<comment type="function">
    <text evidence="1">Catalyzes the dephosphorylation of heptose(II) of the outer membrane lipopolysaccharide core.</text>
</comment>
<comment type="pathway">
    <text evidence="1">Bacterial outer membrane biogenesis; lipopolysaccharide metabolism.</text>
</comment>
<comment type="subcellular location">
    <subcellularLocation>
        <location evidence="1">Periplasm</location>
    </subcellularLocation>
</comment>
<comment type="similarity">
    <text evidence="1">Belongs to the phosphoglycerate mutase family. Ais subfamily.</text>
</comment>
<protein>
    <recommendedName>
        <fullName evidence="1">Lipopolysaccharide core heptose(II)-phosphate phosphatase</fullName>
        <ecNumber evidence="1">3.1.3.-</ecNumber>
    </recommendedName>
</protein>
<evidence type="ECO:0000255" key="1">
    <source>
        <dbReference type="HAMAP-Rule" id="MF_01868"/>
    </source>
</evidence>